<proteinExistence type="inferred from homology"/>
<organism>
    <name type="scientific">Salinispora arenicola (strain CNS-205)</name>
    <dbReference type="NCBI Taxonomy" id="391037"/>
    <lineage>
        <taxon>Bacteria</taxon>
        <taxon>Bacillati</taxon>
        <taxon>Actinomycetota</taxon>
        <taxon>Actinomycetes</taxon>
        <taxon>Micromonosporales</taxon>
        <taxon>Micromonosporaceae</taxon>
        <taxon>Salinispora</taxon>
    </lineage>
</organism>
<gene>
    <name evidence="1" type="primary">tilS</name>
    <name type="ordered locus">Sare_4748</name>
</gene>
<evidence type="ECO:0000255" key="1">
    <source>
        <dbReference type="HAMAP-Rule" id="MF_01161"/>
    </source>
</evidence>
<accession>A8M8I3</accession>
<name>TILS_SALAI</name>
<reference key="1">
    <citation type="submission" date="2007-10" db="EMBL/GenBank/DDBJ databases">
        <title>Complete sequence of Salinispora arenicola CNS-205.</title>
        <authorList>
            <consortium name="US DOE Joint Genome Institute"/>
            <person name="Copeland A."/>
            <person name="Lucas S."/>
            <person name="Lapidus A."/>
            <person name="Barry K."/>
            <person name="Glavina del Rio T."/>
            <person name="Dalin E."/>
            <person name="Tice H."/>
            <person name="Pitluck S."/>
            <person name="Foster B."/>
            <person name="Schmutz J."/>
            <person name="Larimer F."/>
            <person name="Land M."/>
            <person name="Hauser L."/>
            <person name="Kyrpides N."/>
            <person name="Ivanova N."/>
            <person name="Jensen P.R."/>
            <person name="Moore B.S."/>
            <person name="Penn K."/>
            <person name="Jenkins C."/>
            <person name="Udwary D."/>
            <person name="Xiang L."/>
            <person name="Gontang E."/>
            <person name="Richardson P."/>
        </authorList>
    </citation>
    <scope>NUCLEOTIDE SEQUENCE [LARGE SCALE GENOMIC DNA]</scope>
    <source>
        <strain>CNS-205</strain>
    </source>
</reference>
<feature type="chain" id="PRO_1000085369" description="tRNA(Ile)-lysidine synthase">
    <location>
        <begin position="1"/>
        <end position="333"/>
    </location>
</feature>
<feature type="binding site" evidence="1">
    <location>
        <begin position="33"/>
        <end position="38"/>
    </location>
    <ligand>
        <name>ATP</name>
        <dbReference type="ChEBI" id="CHEBI:30616"/>
    </ligand>
</feature>
<dbReference type="EC" id="6.3.4.19" evidence="1"/>
<dbReference type="EMBL" id="CP000850">
    <property type="protein sequence ID" value="ABW00502.1"/>
    <property type="molecule type" value="Genomic_DNA"/>
</dbReference>
<dbReference type="SMR" id="A8M8I3"/>
<dbReference type="STRING" id="391037.Sare_4748"/>
<dbReference type="KEGG" id="saq:Sare_4748"/>
<dbReference type="PATRIC" id="fig|391037.6.peg.4799"/>
<dbReference type="eggNOG" id="COG0037">
    <property type="taxonomic scope" value="Bacteria"/>
</dbReference>
<dbReference type="HOGENOM" id="CLU_018869_1_0_11"/>
<dbReference type="OrthoDB" id="5244702at2"/>
<dbReference type="GO" id="GO:0005737">
    <property type="term" value="C:cytoplasm"/>
    <property type="evidence" value="ECO:0007669"/>
    <property type="project" value="UniProtKB-SubCell"/>
</dbReference>
<dbReference type="GO" id="GO:0005524">
    <property type="term" value="F:ATP binding"/>
    <property type="evidence" value="ECO:0007669"/>
    <property type="project" value="UniProtKB-UniRule"/>
</dbReference>
<dbReference type="GO" id="GO:0032267">
    <property type="term" value="F:tRNA(Ile)-lysidine synthase activity"/>
    <property type="evidence" value="ECO:0007669"/>
    <property type="project" value="UniProtKB-EC"/>
</dbReference>
<dbReference type="GO" id="GO:0006400">
    <property type="term" value="P:tRNA modification"/>
    <property type="evidence" value="ECO:0007669"/>
    <property type="project" value="UniProtKB-UniRule"/>
</dbReference>
<dbReference type="CDD" id="cd01992">
    <property type="entry name" value="TilS_N"/>
    <property type="match status" value="1"/>
</dbReference>
<dbReference type="Gene3D" id="1.20.59.20">
    <property type="match status" value="1"/>
</dbReference>
<dbReference type="Gene3D" id="3.40.50.620">
    <property type="entry name" value="HUPs"/>
    <property type="match status" value="1"/>
</dbReference>
<dbReference type="HAMAP" id="MF_01161">
    <property type="entry name" value="tRNA_Ile_lys_synt"/>
    <property type="match status" value="1"/>
</dbReference>
<dbReference type="InterPro" id="IPR014729">
    <property type="entry name" value="Rossmann-like_a/b/a_fold"/>
</dbReference>
<dbReference type="InterPro" id="IPR011063">
    <property type="entry name" value="TilS/TtcA_N"/>
</dbReference>
<dbReference type="InterPro" id="IPR012094">
    <property type="entry name" value="tRNA_Ile_lys_synt"/>
</dbReference>
<dbReference type="InterPro" id="IPR012795">
    <property type="entry name" value="tRNA_Ile_lys_synt_N"/>
</dbReference>
<dbReference type="InterPro" id="IPR015262">
    <property type="entry name" value="tRNA_Ile_lys_synt_subst-bd"/>
</dbReference>
<dbReference type="NCBIfam" id="TIGR02432">
    <property type="entry name" value="lysidine_TilS_N"/>
    <property type="match status" value="1"/>
</dbReference>
<dbReference type="PANTHER" id="PTHR43033">
    <property type="entry name" value="TRNA(ILE)-LYSIDINE SYNTHASE-RELATED"/>
    <property type="match status" value="1"/>
</dbReference>
<dbReference type="PANTHER" id="PTHR43033:SF1">
    <property type="entry name" value="TRNA(ILE)-LYSIDINE SYNTHASE-RELATED"/>
    <property type="match status" value="1"/>
</dbReference>
<dbReference type="Pfam" id="PF01171">
    <property type="entry name" value="ATP_bind_3"/>
    <property type="match status" value="1"/>
</dbReference>
<dbReference type="Pfam" id="PF09179">
    <property type="entry name" value="TilS"/>
    <property type="match status" value="1"/>
</dbReference>
<dbReference type="SUPFAM" id="SSF52402">
    <property type="entry name" value="Adenine nucleotide alpha hydrolases-like"/>
    <property type="match status" value="1"/>
</dbReference>
<dbReference type="SUPFAM" id="SSF82829">
    <property type="entry name" value="MesJ substrate recognition domain-like"/>
    <property type="match status" value="1"/>
</dbReference>
<keyword id="KW-0067">ATP-binding</keyword>
<keyword id="KW-0963">Cytoplasm</keyword>
<keyword id="KW-0436">Ligase</keyword>
<keyword id="KW-0547">Nucleotide-binding</keyword>
<keyword id="KW-0819">tRNA processing</keyword>
<protein>
    <recommendedName>
        <fullName evidence="1">tRNA(Ile)-lysidine synthase</fullName>
        <ecNumber evidence="1">6.3.4.19</ecNumber>
    </recommendedName>
    <alternativeName>
        <fullName evidence="1">tRNA(Ile)-2-lysyl-cytidine synthase</fullName>
    </alternativeName>
    <alternativeName>
        <fullName evidence="1">tRNA(Ile)-lysidine synthetase</fullName>
    </alternativeName>
</protein>
<sequence>MAALAPPVAAIRRAVRRALTTLPDAGPVLVACSGGADSLALAAATAFVAPRLGRPAGLVTVDHGLQEGSARRATAVVDWAHTAGLAPVEAIRVDVSERPGGPEAAAREARYQALTEAAGRLGAAALLTGHTRDDQAETVLLALARGAGPRGLAGMPTRRWLGEALLLRPLLEVSREQTRAACTALGLAPWTDPHNTDPAYARARVRSEVLPALVRALGPGVLDNLARTARLVAADTAALDEQATVALDGVRHPDGGLCVGGLAGLAPAVRGRVLHVWARELGARPGALSHRHVDALEALVTGWRGQGAAYLPGGLRVFRRAGRLTVVDPCPPA</sequence>
<comment type="function">
    <text evidence="1">Ligates lysine onto the cytidine present at position 34 of the AUA codon-specific tRNA(Ile) that contains the anticodon CAU, in an ATP-dependent manner. Cytidine is converted to lysidine, thus changing the amino acid specificity of the tRNA from methionine to isoleucine.</text>
</comment>
<comment type="catalytic activity">
    <reaction evidence="1">
        <text>cytidine(34) in tRNA(Ile2) + L-lysine + ATP = lysidine(34) in tRNA(Ile2) + AMP + diphosphate + H(+)</text>
        <dbReference type="Rhea" id="RHEA:43744"/>
        <dbReference type="Rhea" id="RHEA-COMP:10625"/>
        <dbReference type="Rhea" id="RHEA-COMP:10670"/>
        <dbReference type="ChEBI" id="CHEBI:15378"/>
        <dbReference type="ChEBI" id="CHEBI:30616"/>
        <dbReference type="ChEBI" id="CHEBI:32551"/>
        <dbReference type="ChEBI" id="CHEBI:33019"/>
        <dbReference type="ChEBI" id="CHEBI:82748"/>
        <dbReference type="ChEBI" id="CHEBI:83665"/>
        <dbReference type="ChEBI" id="CHEBI:456215"/>
        <dbReference type="EC" id="6.3.4.19"/>
    </reaction>
</comment>
<comment type="subcellular location">
    <subcellularLocation>
        <location evidence="1">Cytoplasm</location>
    </subcellularLocation>
</comment>
<comment type="domain">
    <text>The N-terminal region contains the highly conserved SGGXDS motif, predicted to be a P-loop motif involved in ATP binding.</text>
</comment>
<comment type="similarity">
    <text evidence="1">Belongs to the tRNA(Ile)-lysidine synthase family.</text>
</comment>